<organism>
    <name type="scientific">Microplitis demolitor bracovirus (isolate Webb)</name>
    <name type="common">MdBV</name>
    <dbReference type="NCBI Taxonomy" id="654919"/>
    <lineage>
        <taxon>Viruses</taxon>
        <taxon>Viruses incertae sedis</taxon>
        <taxon>Polydnaviriformidae</taxon>
        <taxon>Bracoviriform</taxon>
        <taxon>Microplitis demolitor bracovirus</taxon>
    </lineage>
</organism>
<reference key="1">
    <citation type="journal article" date="2006" name="Virology">
        <title>Polydnavirus genomes reflect their dual roles as mutualists and pathogens.</title>
        <authorList>
            <person name="Webb B.A."/>
            <person name="Strand M.R."/>
            <person name="Dickey S.E."/>
            <person name="Beck M.H."/>
            <person name="Hilgarth R.S."/>
            <person name="Barney W.E."/>
            <person name="Kadash K."/>
            <person name="Kroemer J.A."/>
            <person name="Lindstrom K.G."/>
            <person name="Rattanadechakul W."/>
            <person name="Shelby K.S."/>
            <person name="Thoetkiattikul H."/>
            <person name="Turnbull M.W."/>
            <person name="Witherell R.A."/>
        </authorList>
    </citation>
    <scope>NUCLEOTIDE SEQUENCE [GENOMIC DNA]</scope>
</reference>
<protein>
    <recommendedName>
        <fullName>Uncharacterized protein E1</fullName>
    </recommendedName>
</protein>
<name>YE1_MDBVW</name>
<proteinExistence type="predicted"/>
<accession>Q5I163</accession>
<keyword id="KW-1185">Reference proteome</keyword>
<organismHost>
    <name type="scientific">Microplitis demolitor</name>
    <name type="common">Parasitoid wasp</name>
    <dbReference type="NCBI Taxonomy" id="69319"/>
</organismHost>
<sequence>MTILLSSNFLNHKTLLCSIDSAVTLFMETMMPSDVLCLLQDSLISFCKINLATTRGIFSIRWARTTSHSMNQYLSLNVAILIQENHHRDTRNVNAQYLSTSQRSRLYTCISINIYFK</sequence>
<gene>
    <name type="primary">E1</name>
</gene>
<feature type="chain" id="PRO_0000405395" description="Uncharacterized protein E1">
    <location>
        <begin position="1"/>
        <end position="117"/>
    </location>
</feature>
<dbReference type="EMBL" id="AY875680">
    <property type="protein sequence ID" value="AAW51770.1"/>
    <property type="molecule type" value="Genomic_DNA"/>
</dbReference>
<dbReference type="RefSeq" id="YP_239365.1">
    <property type="nucleotide sequence ID" value="NC_007030.2"/>
</dbReference>
<dbReference type="KEGG" id="vg:5075801"/>
<dbReference type="Proteomes" id="UP000008168">
    <property type="component" value="Genome"/>
</dbReference>